<organism>
    <name type="scientific">Streptococcus equi subsp. equi (strain 4047)</name>
    <dbReference type="NCBI Taxonomy" id="553482"/>
    <lineage>
        <taxon>Bacteria</taxon>
        <taxon>Bacillati</taxon>
        <taxon>Bacillota</taxon>
        <taxon>Bacilli</taxon>
        <taxon>Lactobacillales</taxon>
        <taxon>Streptococcaceae</taxon>
        <taxon>Streptococcus</taxon>
    </lineage>
</organism>
<feature type="chain" id="PRO_1000165351" description="Small ribosomal subunit protein uS8">
    <location>
        <begin position="1"/>
        <end position="132"/>
    </location>
</feature>
<accession>C0MAG4</accession>
<protein>
    <recommendedName>
        <fullName evidence="1">Small ribosomal subunit protein uS8</fullName>
    </recommendedName>
    <alternativeName>
        <fullName evidence="2">30S ribosomal protein S8</fullName>
    </alternativeName>
</protein>
<gene>
    <name evidence="1" type="primary">rpsH</name>
    <name type="ordered locus">SEQ_0069</name>
</gene>
<comment type="function">
    <text evidence="1">One of the primary rRNA binding proteins, it binds directly to 16S rRNA central domain where it helps coordinate assembly of the platform of the 30S subunit.</text>
</comment>
<comment type="subunit">
    <text evidence="1">Part of the 30S ribosomal subunit. Contacts proteins S5 and S12.</text>
</comment>
<comment type="similarity">
    <text evidence="1">Belongs to the universal ribosomal protein uS8 family.</text>
</comment>
<evidence type="ECO:0000255" key="1">
    <source>
        <dbReference type="HAMAP-Rule" id="MF_01302"/>
    </source>
</evidence>
<evidence type="ECO:0000305" key="2"/>
<reference key="1">
    <citation type="journal article" date="2009" name="PLoS Pathog.">
        <title>Genomic evidence for the evolution of Streptococcus equi: host restriction, increased virulence, and genetic exchange with human pathogens.</title>
        <authorList>
            <person name="Holden M.T.G."/>
            <person name="Heather Z."/>
            <person name="Paillot R."/>
            <person name="Steward K.F."/>
            <person name="Webb K."/>
            <person name="Ainslie F."/>
            <person name="Jourdan T."/>
            <person name="Bason N.C."/>
            <person name="Holroyd N.E."/>
            <person name="Mungall K."/>
            <person name="Quail M.A."/>
            <person name="Sanders M."/>
            <person name="Simmonds M."/>
            <person name="Willey D."/>
            <person name="Brooks K."/>
            <person name="Aanensen D.M."/>
            <person name="Spratt B.G."/>
            <person name="Jolley K.A."/>
            <person name="Maiden M.C.J."/>
            <person name="Kehoe M."/>
            <person name="Chanter N."/>
            <person name="Bentley S.D."/>
            <person name="Robinson C."/>
            <person name="Maskell D.J."/>
            <person name="Parkhill J."/>
            <person name="Waller A.S."/>
        </authorList>
    </citation>
    <scope>NUCLEOTIDE SEQUENCE [LARGE SCALE GENOMIC DNA]</scope>
    <source>
        <strain>4047</strain>
    </source>
</reference>
<keyword id="KW-0687">Ribonucleoprotein</keyword>
<keyword id="KW-0689">Ribosomal protein</keyword>
<keyword id="KW-0694">RNA-binding</keyword>
<keyword id="KW-0699">rRNA-binding</keyword>
<proteinExistence type="inferred from homology"/>
<dbReference type="EMBL" id="FM204883">
    <property type="protein sequence ID" value="CAW91993.1"/>
    <property type="molecule type" value="Genomic_DNA"/>
</dbReference>
<dbReference type="RefSeq" id="WP_012514743.1">
    <property type="nucleotide sequence ID" value="NC_012471.1"/>
</dbReference>
<dbReference type="SMR" id="C0MAG4"/>
<dbReference type="GeneID" id="83703918"/>
<dbReference type="KEGG" id="seu:SEQ_0069"/>
<dbReference type="HOGENOM" id="CLU_098428_0_2_9"/>
<dbReference type="OrthoDB" id="9802617at2"/>
<dbReference type="Proteomes" id="UP000001365">
    <property type="component" value="Chromosome"/>
</dbReference>
<dbReference type="GO" id="GO:1990904">
    <property type="term" value="C:ribonucleoprotein complex"/>
    <property type="evidence" value="ECO:0007669"/>
    <property type="project" value="UniProtKB-KW"/>
</dbReference>
<dbReference type="GO" id="GO:0005840">
    <property type="term" value="C:ribosome"/>
    <property type="evidence" value="ECO:0007669"/>
    <property type="project" value="UniProtKB-KW"/>
</dbReference>
<dbReference type="GO" id="GO:0019843">
    <property type="term" value="F:rRNA binding"/>
    <property type="evidence" value="ECO:0007669"/>
    <property type="project" value="UniProtKB-UniRule"/>
</dbReference>
<dbReference type="GO" id="GO:0003735">
    <property type="term" value="F:structural constituent of ribosome"/>
    <property type="evidence" value="ECO:0007669"/>
    <property type="project" value="InterPro"/>
</dbReference>
<dbReference type="GO" id="GO:0006412">
    <property type="term" value="P:translation"/>
    <property type="evidence" value="ECO:0007669"/>
    <property type="project" value="UniProtKB-UniRule"/>
</dbReference>
<dbReference type="FunFam" id="3.30.1370.30:FF:000002">
    <property type="entry name" value="30S ribosomal protein S8"/>
    <property type="match status" value="1"/>
</dbReference>
<dbReference type="FunFam" id="3.30.1490.10:FF:000001">
    <property type="entry name" value="30S ribosomal protein S8"/>
    <property type="match status" value="1"/>
</dbReference>
<dbReference type="Gene3D" id="3.30.1370.30">
    <property type="match status" value="1"/>
</dbReference>
<dbReference type="Gene3D" id="3.30.1490.10">
    <property type="match status" value="1"/>
</dbReference>
<dbReference type="HAMAP" id="MF_01302_B">
    <property type="entry name" value="Ribosomal_uS8_B"/>
    <property type="match status" value="1"/>
</dbReference>
<dbReference type="InterPro" id="IPR000630">
    <property type="entry name" value="Ribosomal_uS8"/>
</dbReference>
<dbReference type="InterPro" id="IPR047863">
    <property type="entry name" value="Ribosomal_uS8_CS"/>
</dbReference>
<dbReference type="InterPro" id="IPR035987">
    <property type="entry name" value="Ribosomal_uS8_sf"/>
</dbReference>
<dbReference type="NCBIfam" id="NF001109">
    <property type="entry name" value="PRK00136.1"/>
    <property type="match status" value="1"/>
</dbReference>
<dbReference type="PANTHER" id="PTHR11758">
    <property type="entry name" value="40S RIBOSOMAL PROTEIN S15A"/>
    <property type="match status" value="1"/>
</dbReference>
<dbReference type="Pfam" id="PF00410">
    <property type="entry name" value="Ribosomal_S8"/>
    <property type="match status" value="1"/>
</dbReference>
<dbReference type="SUPFAM" id="SSF56047">
    <property type="entry name" value="Ribosomal protein S8"/>
    <property type="match status" value="1"/>
</dbReference>
<dbReference type="PROSITE" id="PS00053">
    <property type="entry name" value="RIBOSOMAL_S8"/>
    <property type="match status" value="1"/>
</dbReference>
<name>RS8_STRE4</name>
<sequence length="132" mass="14756">MVMTDPIADFLTRIRNANQVKHEVLEVPASNIKKGIAEILKREGFIKNVEVIEDGKQGIIRVFLKYGQNGERVITNLKRVSKPGLRIYSKREDVPKVLNGLGIAIISTSEGLLTDKEARQKNVGGEVIAYVW</sequence>